<keyword id="KW-0066">ATP synthesis</keyword>
<keyword id="KW-0067">ATP-binding</keyword>
<keyword id="KW-0139">CF(1)</keyword>
<keyword id="KW-0150">Chloroplast</keyword>
<keyword id="KW-0375">Hydrogen ion transport</keyword>
<keyword id="KW-0406">Ion transport</keyword>
<keyword id="KW-0472">Membrane</keyword>
<keyword id="KW-0547">Nucleotide-binding</keyword>
<keyword id="KW-0934">Plastid</keyword>
<keyword id="KW-1185">Reference proteome</keyword>
<keyword id="KW-0793">Thylakoid</keyword>
<keyword id="KW-1278">Translocase</keyword>
<keyword id="KW-0813">Transport</keyword>
<protein>
    <recommendedName>
        <fullName evidence="1">ATP synthase subunit alpha, chloroplastic</fullName>
        <ecNumber evidence="1">7.1.2.2</ecNumber>
    </recommendedName>
    <alternativeName>
        <fullName evidence="1">ATP synthase F1 sector subunit alpha</fullName>
    </alternativeName>
    <alternativeName>
        <fullName evidence="1">F-ATPase subunit alpha</fullName>
    </alternativeName>
</protein>
<proteinExistence type="inferred from homology"/>
<accession>Q27S65</accession>
<accession>Q2VEJ1</accession>
<sequence length="507" mass="55411">MVTIRADEISNIIRERIEQYNREVKIVNTGTVLQVGDGIARIHGLDEVMAGELVEFEEGTIGIALNLESNNVGVVLMGDGLLIQEGSSVKATGRIAQIPVSEAYLGRVVNALAKPIDGRGEISASEFRLIESAAPGIISRRSVYEPLQTGLIAIDSMIPIGRGQRELIIGDRQTGKTAVATDTILNQQGQNVICVYVAIGQKASSVAQVVTTLQERGAMEYTIVVAETADSPATLQYLAPYTGAALAEYFMYRERHTLIIYDDLSKQAQAYRQMSLLLRRPPGREAYPGDVFYLHSRLLERAAKLSSSLGEGSMTALPIVETQSGDVSAYIPTNVISITDGQIFLSADLFNSGIRPAINVGISVSRVGSAAQIKAMKQVAGKLKLELAQFAELEAFAQFASDLDKATQNQLARGQRLRELLKQSQSAPLTVEEQIMTIYTGTNGYLDSLEVGQVRKFLVELRTYLKTTKPQFQEIISSTKTFTEEAEALLKEAIQEQMDRFILQEQA</sequence>
<name>ATPA_SOLTU</name>
<reference key="1">
    <citation type="journal article" date="2006" name="Plant Cell Rep.">
        <title>The complete chloroplast genome sequences of Solanum tuberosum and comparative analysis with Solanaceae species identified the presence of a 241-bp deletion in cultivated potato chloroplast DNA sequence.</title>
        <authorList>
            <person name="Chung H.-J."/>
            <person name="Jung J.D."/>
            <person name="Park H.-W."/>
            <person name="Kim J.-H."/>
            <person name="Cha H.W."/>
            <person name="Min S.R."/>
            <person name="Jeong W.-J."/>
            <person name="Liu J.R."/>
        </authorList>
    </citation>
    <scope>NUCLEOTIDE SEQUENCE [LARGE SCALE GENOMIC DNA]</scope>
    <source>
        <strain>cv. Desiree</strain>
    </source>
</reference>
<reference key="2">
    <citation type="submission" date="2006-02" db="EMBL/GenBank/DDBJ databases">
        <title>Complete chloroplast genome sequences of Solanum tuberosum cultivar Desiree and comparative analyses with other Solanaceae genomes.</title>
        <authorList>
            <person name="Gargano D."/>
            <person name="Scotti N."/>
            <person name="Vezzi A."/>
            <person name="Bilardi A."/>
            <person name="Valle G."/>
            <person name="Grillo S."/>
            <person name="Cardi T."/>
        </authorList>
    </citation>
    <scope>NUCLEOTIDE SEQUENCE [LARGE SCALE GENOMIC DNA]</scope>
    <source>
        <strain>cv. Desiree</strain>
    </source>
</reference>
<evidence type="ECO:0000255" key="1">
    <source>
        <dbReference type="HAMAP-Rule" id="MF_01346"/>
    </source>
</evidence>
<evidence type="ECO:0000305" key="2"/>
<gene>
    <name evidence="1" type="primary">atpA</name>
</gene>
<geneLocation type="chloroplast"/>
<dbReference type="EC" id="7.1.2.2" evidence="1"/>
<dbReference type="EMBL" id="DQ231562">
    <property type="protein sequence ID" value="ABB90028.1"/>
    <property type="molecule type" value="Genomic_DNA"/>
</dbReference>
<dbReference type="EMBL" id="DQ386163">
    <property type="protein sequence ID" value="ABD47042.1"/>
    <property type="molecule type" value="Genomic_DNA"/>
</dbReference>
<dbReference type="RefSeq" id="YP_635624.1">
    <property type="nucleotide sequence ID" value="NC_008096.2"/>
</dbReference>
<dbReference type="SMR" id="Q27S65"/>
<dbReference type="FunCoup" id="Q27S65">
    <property type="interactions" value="317"/>
</dbReference>
<dbReference type="STRING" id="4113.Q27S65"/>
<dbReference type="EnsemblPlants" id="RHC08H1G2576.2.1">
    <property type="protein sequence ID" value="RHC08H1G2576.2.1.cds.1"/>
    <property type="gene ID" value="RHC08H1G2576.2"/>
</dbReference>
<dbReference type="EnsemblPlants" id="RHC10H1G0003.2.1">
    <property type="protein sequence ID" value="RHC10H1G0003.2.1.cds.1"/>
    <property type="gene ID" value="RHC10H1G0003.2"/>
</dbReference>
<dbReference type="GeneID" id="4099854"/>
<dbReference type="Gramene" id="RHC08H1G2576.2.1">
    <property type="protein sequence ID" value="RHC08H1G2576.2.1.cds.1"/>
    <property type="gene ID" value="RHC08H1G2576.2"/>
</dbReference>
<dbReference type="Gramene" id="RHC10H1G0003.2.1">
    <property type="protein sequence ID" value="RHC10H1G0003.2.1.cds.1"/>
    <property type="gene ID" value="RHC10H1G0003.2"/>
</dbReference>
<dbReference type="KEGG" id="sot:4099854"/>
<dbReference type="eggNOG" id="KOG1353">
    <property type="taxonomic scope" value="Eukaryota"/>
</dbReference>
<dbReference type="InParanoid" id="Q27S65"/>
<dbReference type="OrthoDB" id="1273573at2759"/>
<dbReference type="Proteomes" id="UP000011115">
    <property type="component" value="Unassembled WGS sequence"/>
</dbReference>
<dbReference type="ExpressionAtlas" id="Q27S65">
    <property type="expression patterns" value="baseline and differential"/>
</dbReference>
<dbReference type="GO" id="GO:0009535">
    <property type="term" value="C:chloroplast thylakoid membrane"/>
    <property type="evidence" value="ECO:0007669"/>
    <property type="project" value="UniProtKB-SubCell"/>
</dbReference>
<dbReference type="GO" id="GO:0045259">
    <property type="term" value="C:proton-transporting ATP synthase complex"/>
    <property type="evidence" value="ECO:0007669"/>
    <property type="project" value="UniProtKB-KW"/>
</dbReference>
<dbReference type="GO" id="GO:0043531">
    <property type="term" value="F:ADP binding"/>
    <property type="evidence" value="ECO:0000318"/>
    <property type="project" value="GO_Central"/>
</dbReference>
<dbReference type="GO" id="GO:0005524">
    <property type="term" value="F:ATP binding"/>
    <property type="evidence" value="ECO:0000318"/>
    <property type="project" value="GO_Central"/>
</dbReference>
<dbReference type="GO" id="GO:0046933">
    <property type="term" value="F:proton-transporting ATP synthase activity, rotational mechanism"/>
    <property type="evidence" value="ECO:0007669"/>
    <property type="project" value="UniProtKB-UniRule"/>
</dbReference>
<dbReference type="GO" id="GO:0015986">
    <property type="term" value="P:proton motive force-driven ATP synthesis"/>
    <property type="evidence" value="ECO:0000318"/>
    <property type="project" value="GO_Central"/>
</dbReference>
<dbReference type="CDD" id="cd18113">
    <property type="entry name" value="ATP-synt_F1_alpha_C"/>
    <property type="match status" value="1"/>
</dbReference>
<dbReference type="CDD" id="cd18116">
    <property type="entry name" value="ATP-synt_F1_alpha_N"/>
    <property type="match status" value="1"/>
</dbReference>
<dbReference type="CDD" id="cd01132">
    <property type="entry name" value="F1-ATPase_alpha_CD"/>
    <property type="match status" value="1"/>
</dbReference>
<dbReference type="FunFam" id="1.20.150.20:FF:000001">
    <property type="entry name" value="ATP synthase subunit alpha"/>
    <property type="match status" value="1"/>
</dbReference>
<dbReference type="FunFam" id="2.40.30.20:FF:000001">
    <property type="entry name" value="ATP synthase subunit alpha"/>
    <property type="match status" value="1"/>
</dbReference>
<dbReference type="FunFam" id="3.40.50.300:FF:000002">
    <property type="entry name" value="ATP synthase subunit alpha"/>
    <property type="match status" value="1"/>
</dbReference>
<dbReference type="Gene3D" id="2.40.30.20">
    <property type="match status" value="1"/>
</dbReference>
<dbReference type="Gene3D" id="1.20.150.20">
    <property type="entry name" value="ATP synthase alpha/beta chain, C-terminal domain"/>
    <property type="match status" value="1"/>
</dbReference>
<dbReference type="Gene3D" id="3.40.50.300">
    <property type="entry name" value="P-loop containing nucleotide triphosphate hydrolases"/>
    <property type="match status" value="1"/>
</dbReference>
<dbReference type="HAMAP" id="MF_01346">
    <property type="entry name" value="ATP_synth_alpha_bact"/>
    <property type="match status" value="1"/>
</dbReference>
<dbReference type="InterPro" id="IPR023366">
    <property type="entry name" value="ATP_synth_asu-like_sf"/>
</dbReference>
<dbReference type="InterPro" id="IPR000793">
    <property type="entry name" value="ATP_synth_asu_C"/>
</dbReference>
<dbReference type="InterPro" id="IPR038376">
    <property type="entry name" value="ATP_synth_asu_C_sf"/>
</dbReference>
<dbReference type="InterPro" id="IPR033732">
    <property type="entry name" value="ATP_synth_F1_a_nt-bd_dom"/>
</dbReference>
<dbReference type="InterPro" id="IPR005294">
    <property type="entry name" value="ATP_synth_F1_asu"/>
</dbReference>
<dbReference type="InterPro" id="IPR020003">
    <property type="entry name" value="ATPase_a/bsu_AS"/>
</dbReference>
<dbReference type="InterPro" id="IPR004100">
    <property type="entry name" value="ATPase_F1/V1/A1_a/bsu_N"/>
</dbReference>
<dbReference type="InterPro" id="IPR036121">
    <property type="entry name" value="ATPase_F1/V1/A1_a/bsu_N_sf"/>
</dbReference>
<dbReference type="InterPro" id="IPR000194">
    <property type="entry name" value="ATPase_F1/V1/A1_a/bsu_nucl-bd"/>
</dbReference>
<dbReference type="InterPro" id="IPR027417">
    <property type="entry name" value="P-loop_NTPase"/>
</dbReference>
<dbReference type="NCBIfam" id="TIGR00962">
    <property type="entry name" value="atpA"/>
    <property type="match status" value="1"/>
</dbReference>
<dbReference type="NCBIfam" id="NF009884">
    <property type="entry name" value="PRK13343.1"/>
    <property type="match status" value="1"/>
</dbReference>
<dbReference type="PANTHER" id="PTHR48082">
    <property type="entry name" value="ATP SYNTHASE SUBUNIT ALPHA, MITOCHONDRIAL"/>
    <property type="match status" value="1"/>
</dbReference>
<dbReference type="PANTHER" id="PTHR48082:SF2">
    <property type="entry name" value="ATP SYNTHASE SUBUNIT ALPHA, MITOCHONDRIAL"/>
    <property type="match status" value="1"/>
</dbReference>
<dbReference type="Pfam" id="PF00006">
    <property type="entry name" value="ATP-synt_ab"/>
    <property type="match status" value="1"/>
</dbReference>
<dbReference type="Pfam" id="PF00306">
    <property type="entry name" value="ATP-synt_ab_C"/>
    <property type="match status" value="1"/>
</dbReference>
<dbReference type="Pfam" id="PF02874">
    <property type="entry name" value="ATP-synt_ab_N"/>
    <property type="match status" value="1"/>
</dbReference>
<dbReference type="PIRSF" id="PIRSF039088">
    <property type="entry name" value="F_ATPase_subunit_alpha"/>
    <property type="match status" value="1"/>
</dbReference>
<dbReference type="SUPFAM" id="SSF47917">
    <property type="entry name" value="C-terminal domain of alpha and beta subunits of F1 ATP synthase"/>
    <property type="match status" value="1"/>
</dbReference>
<dbReference type="SUPFAM" id="SSF50615">
    <property type="entry name" value="N-terminal domain of alpha and beta subunits of F1 ATP synthase"/>
    <property type="match status" value="1"/>
</dbReference>
<dbReference type="SUPFAM" id="SSF52540">
    <property type="entry name" value="P-loop containing nucleoside triphosphate hydrolases"/>
    <property type="match status" value="1"/>
</dbReference>
<dbReference type="PROSITE" id="PS00152">
    <property type="entry name" value="ATPASE_ALPHA_BETA"/>
    <property type="match status" value="1"/>
</dbReference>
<comment type="function">
    <text evidence="1">Produces ATP from ADP in the presence of a proton gradient across the membrane. The alpha chain is a regulatory subunit.</text>
</comment>
<comment type="catalytic activity">
    <reaction evidence="1">
        <text>ATP + H2O + 4 H(+)(in) = ADP + phosphate + 5 H(+)(out)</text>
        <dbReference type="Rhea" id="RHEA:57720"/>
        <dbReference type="ChEBI" id="CHEBI:15377"/>
        <dbReference type="ChEBI" id="CHEBI:15378"/>
        <dbReference type="ChEBI" id="CHEBI:30616"/>
        <dbReference type="ChEBI" id="CHEBI:43474"/>
        <dbReference type="ChEBI" id="CHEBI:456216"/>
        <dbReference type="EC" id="7.1.2.2"/>
    </reaction>
</comment>
<comment type="subunit">
    <text evidence="1">F-type ATPases have 2 components, CF(1) - the catalytic core - and CF(0) - the membrane proton channel. CF(1) has five subunits: alpha(3), beta(3), gamma(1), delta(1), epsilon(1). CF(0) has four main subunits: a, b, b' and c.</text>
</comment>
<comment type="subcellular location">
    <subcellularLocation>
        <location evidence="1">Plastid</location>
        <location evidence="1">Chloroplast thylakoid membrane</location>
        <topology evidence="1">Peripheral membrane protein</topology>
    </subcellularLocation>
</comment>
<comment type="similarity">
    <text evidence="1">Belongs to the ATPase alpha/beta chains family.</text>
</comment>
<feature type="chain" id="PRO_0000238442" description="ATP synthase subunit alpha, chloroplastic">
    <location>
        <begin position="1"/>
        <end position="507"/>
    </location>
</feature>
<feature type="binding site" evidence="1">
    <location>
        <begin position="170"/>
        <end position="177"/>
    </location>
    <ligand>
        <name>ATP</name>
        <dbReference type="ChEBI" id="CHEBI:30616"/>
    </ligand>
</feature>
<feature type="site" description="Required for activity" evidence="1">
    <location>
        <position position="363"/>
    </location>
</feature>
<feature type="sequence conflict" description="In Ref. 1; ABB90028." evidence="2" ref="1">
    <original>F</original>
    <variation>L</variation>
    <location>
        <position position="344"/>
    </location>
</feature>
<organism>
    <name type="scientific">Solanum tuberosum</name>
    <name type="common">Potato</name>
    <dbReference type="NCBI Taxonomy" id="4113"/>
    <lineage>
        <taxon>Eukaryota</taxon>
        <taxon>Viridiplantae</taxon>
        <taxon>Streptophyta</taxon>
        <taxon>Embryophyta</taxon>
        <taxon>Tracheophyta</taxon>
        <taxon>Spermatophyta</taxon>
        <taxon>Magnoliopsida</taxon>
        <taxon>eudicotyledons</taxon>
        <taxon>Gunneridae</taxon>
        <taxon>Pentapetalae</taxon>
        <taxon>asterids</taxon>
        <taxon>lamiids</taxon>
        <taxon>Solanales</taxon>
        <taxon>Solanaceae</taxon>
        <taxon>Solanoideae</taxon>
        <taxon>Solaneae</taxon>
        <taxon>Solanum</taxon>
    </lineage>
</organism>